<name>PHCA2_PSETP</name>
<accession>Q52452</accession>
<protein>
    <recommendedName>
        <fullName>C-phycocyanin-2 alpha subunit</fullName>
    </recommendedName>
</protein>
<reference key="1">
    <citation type="submission" date="1992-08" db="EMBL/GenBank/DDBJ databases">
        <title>Organization and transcription of the genes encoding two differentially expressed phycocyanins in the cyanobacterium Pseudanabaena sp. PCC 7409.</title>
        <authorList>
            <person name="Dubbs J.M."/>
            <person name="Bryant D.A."/>
        </authorList>
    </citation>
    <scope>NUCLEOTIDE SEQUENCE [GENOMIC DNA]</scope>
</reference>
<evidence type="ECO:0000250" key="1"/>
<evidence type="ECO:0000250" key="2">
    <source>
        <dbReference type="UniProtKB" id="P13530"/>
    </source>
</evidence>
<evidence type="ECO:0000305" key="3"/>
<sequence>MKTPLTEAVSTADSQGRYLSVPEMQAAFGRLRTATASLDAAKGLGAKASSLAEGAANAVYQKYPYTTQQSGNNFASTPRGKAKCVRDIGYYVRMITYCLIAGSTGPMDDYLVSGLAEINRSFDLSPSWYVEALKYIKANHGLSGDAALEANSYIDYAINALS</sequence>
<gene>
    <name type="primary">cpcA2</name>
</gene>
<proteinExistence type="inferred from homology"/>
<dbReference type="EMBL" id="M99427">
    <property type="protein sequence ID" value="AAA26044.1"/>
    <property type="molecule type" value="Genomic_DNA"/>
</dbReference>
<dbReference type="SMR" id="Q52452"/>
<dbReference type="GO" id="GO:0030089">
    <property type="term" value="C:phycobilisome"/>
    <property type="evidence" value="ECO:0007669"/>
    <property type="project" value="UniProtKB-KW"/>
</dbReference>
<dbReference type="GO" id="GO:0031676">
    <property type="term" value="C:plasma membrane-derived thylakoid membrane"/>
    <property type="evidence" value="ECO:0007669"/>
    <property type="project" value="UniProtKB-SubCell"/>
</dbReference>
<dbReference type="GO" id="GO:0015979">
    <property type="term" value="P:photosynthesis"/>
    <property type="evidence" value="ECO:0007669"/>
    <property type="project" value="UniProtKB-KW"/>
</dbReference>
<dbReference type="Gene3D" id="1.10.490.20">
    <property type="entry name" value="Phycocyanins"/>
    <property type="match status" value="1"/>
</dbReference>
<dbReference type="InterPro" id="IPR009050">
    <property type="entry name" value="Globin-like_sf"/>
</dbReference>
<dbReference type="InterPro" id="IPR012128">
    <property type="entry name" value="Phycobilisome_asu/bsu"/>
</dbReference>
<dbReference type="InterPro" id="IPR038719">
    <property type="entry name" value="Phycobilisome_asu/bsu_sf"/>
</dbReference>
<dbReference type="InterPro" id="IPR006246">
    <property type="entry name" value="Phycocyanin_a"/>
</dbReference>
<dbReference type="NCBIfam" id="TIGR01338">
    <property type="entry name" value="phycocy_alpha"/>
    <property type="match status" value="1"/>
</dbReference>
<dbReference type="PANTHER" id="PTHR34011:SF4">
    <property type="entry name" value="C-PHYCOCYANIN ALPHA SUBUNIT"/>
    <property type="match status" value="1"/>
</dbReference>
<dbReference type="PANTHER" id="PTHR34011">
    <property type="entry name" value="PHYCOBILISOME 32.1 KDA LINKER POLYPEPTIDE, PHYCOCYANIN-ASSOCIATED, ROD 2-RELATED"/>
    <property type="match status" value="1"/>
</dbReference>
<dbReference type="Pfam" id="PF00502">
    <property type="entry name" value="Phycobilisome"/>
    <property type="match status" value="1"/>
</dbReference>
<dbReference type="PIRSF" id="PIRSF000081">
    <property type="entry name" value="Phycocyanin"/>
    <property type="match status" value="1"/>
</dbReference>
<dbReference type="SUPFAM" id="SSF46458">
    <property type="entry name" value="Globin-like"/>
    <property type="match status" value="1"/>
</dbReference>
<organism>
    <name type="scientific">Pseudanabaena tenuis (strain PCC 7409)</name>
    <dbReference type="NCBI Taxonomy" id="29415"/>
    <lineage>
        <taxon>Bacteria</taxon>
        <taxon>Bacillati</taxon>
        <taxon>Cyanobacteriota</taxon>
        <taxon>Cyanophyceae</taxon>
        <taxon>Pseudanabaenales</taxon>
        <taxon>Pseudanabaenaceae</taxon>
        <taxon>Pseudanabaena</taxon>
    </lineage>
</organism>
<comment type="function">
    <text>Light-harvesting photosynthetic bile pigment-protein from the phycobiliprotein complex (phycobilisome, PBS). Phycocyanin is the major phycobiliprotein in the PBS rod.</text>
</comment>
<comment type="subunit">
    <text evidence="2">Heterodimer of an alpha and a beta subunit, which further assembles into trimers and the trimers into hexamers.</text>
</comment>
<comment type="subcellular location">
    <subcellularLocation>
        <location evidence="1">Cellular thylakoid membrane</location>
        <topology evidence="1">Peripheral membrane protein</topology>
        <orientation evidence="1">Cytoplasmic side</orientation>
    </subcellularLocation>
    <text evidence="1">Part of the phycobilisome rod.</text>
</comment>
<comment type="PTM">
    <text evidence="1 2">Contains one covalently linked bilin chromophore.</text>
</comment>
<comment type="similarity">
    <text evidence="3">Belongs to the phycobiliprotein family.</text>
</comment>
<feature type="chain" id="PRO_0000199125" description="C-phycocyanin-2 alpha subunit">
    <location>
        <begin position="1"/>
        <end position="162"/>
    </location>
</feature>
<feature type="binding site" description="covalent" evidence="2">
    <location>
        <position position="84"/>
    </location>
    <ligand>
        <name>(2R,3E)-phycocyanobilin</name>
        <dbReference type="ChEBI" id="CHEBI:85275"/>
    </ligand>
</feature>
<keyword id="KW-0042">Antenna complex</keyword>
<keyword id="KW-0089">Bile pigment</keyword>
<keyword id="KW-0157">Chromophore</keyword>
<keyword id="KW-0249">Electron transport</keyword>
<keyword id="KW-0472">Membrane</keyword>
<keyword id="KW-0602">Photosynthesis</keyword>
<keyword id="KW-0605">Phycobilisome</keyword>
<keyword id="KW-0793">Thylakoid</keyword>
<keyword id="KW-0813">Transport</keyword>